<reference key="1">
    <citation type="journal article" date="2011" name="J. Bacteriol.">
        <title>Comparative genomics of 28 Salmonella enterica isolates: evidence for CRISPR-mediated adaptive sublineage evolution.</title>
        <authorList>
            <person name="Fricke W.F."/>
            <person name="Mammel M.K."/>
            <person name="McDermott P.F."/>
            <person name="Tartera C."/>
            <person name="White D.G."/>
            <person name="Leclerc J.E."/>
            <person name="Ravel J."/>
            <person name="Cebula T.A."/>
        </authorList>
    </citation>
    <scope>NUCLEOTIDE SEQUENCE [LARGE SCALE GENOMIC DNA]</scope>
    <source>
        <strain>SL483</strain>
    </source>
</reference>
<name>SYFA_SALA4</name>
<organism>
    <name type="scientific">Salmonella agona (strain SL483)</name>
    <dbReference type="NCBI Taxonomy" id="454166"/>
    <lineage>
        <taxon>Bacteria</taxon>
        <taxon>Pseudomonadati</taxon>
        <taxon>Pseudomonadota</taxon>
        <taxon>Gammaproteobacteria</taxon>
        <taxon>Enterobacterales</taxon>
        <taxon>Enterobacteriaceae</taxon>
        <taxon>Salmonella</taxon>
    </lineage>
</organism>
<comment type="catalytic activity">
    <reaction evidence="1">
        <text>tRNA(Phe) + L-phenylalanine + ATP = L-phenylalanyl-tRNA(Phe) + AMP + diphosphate + H(+)</text>
        <dbReference type="Rhea" id="RHEA:19413"/>
        <dbReference type="Rhea" id="RHEA-COMP:9668"/>
        <dbReference type="Rhea" id="RHEA-COMP:9699"/>
        <dbReference type="ChEBI" id="CHEBI:15378"/>
        <dbReference type="ChEBI" id="CHEBI:30616"/>
        <dbReference type="ChEBI" id="CHEBI:33019"/>
        <dbReference type="ChEBI" id="CHEBI:58095"/>
        <dbReference type="ChEBI" id="CHEBI:78442"/>
        <dbReference type="ChEBI" id="CHEBI:78531"/>
        <dbReference type="ChEBI" id="CHEBI:456215"/>
        <dbReference type="EC" id="6.1.1.20"/>
    </reaction>
</comment>
<comment type="cofactor">
    <cofactor evidence="1">
        <name>Mg(2+)</name>
        <dbReference type="ChEBI" id="CHEBI:18420"/>
    </cofactor>
    <text evidence="1">Binds 2 magnesium ions per tetramer.</text>
</comment>
<comment type="subunit">
    <text evidence="1">Tetramer of two alpha and two beta subunits.</text>
</comment>
<comment type="subcellular location">
    <subcellularLocation>
        <location evidence="1">Cytoplasm</location>
    </subcellularLocation>
</comment>
<comment type="similarity">
    <text evidence="1">Belongs to the class-II aminoacyl-tRNA synthetase family. Phe-tRNA synthetase alpha subunit type 1 subfamily.</text>
</comment>
<gene>
    <name evidence="1" type="primary">pheS</name>
    <name type="ordered locus">SeAg_B1836</name>
</gene>
<dbReference type="EC" id="6.1.1.20" evidence="1"/>
<dbReference type="EMBL" id="CP001138">
    <property type="protein sequence ID" value="ACH49790.1"/>
    <property type="molecule type" value="Genomic_DNA"/>
</dbReference>
<dbReference type="RefSeq" id="WP_000018570.1">
    <property type="nucleotide sequence ID" value="NC_011149.1"/>
</dbReference>
<dbReference type="SMR" id="B5F7F8"/>
<dbReference type="KEGG" id="sea:SeAg_B1836"/>
<dbReference type="HOGENOM" id="CLU_025086_0_1_6"/>
<dbReference type="Proteomes" id="UP000008819">
    <property type="component" value="Chromosome"/>
</dbReference>
<dbReference type="GO" id="GO:0005737">
    <property type="term" value="C:cytoplasm"/>
    <property type="evidence" value="ECO:0007669"/>
    <property type="project" value="UniProtKB-SubCell"/>
</dbReference>
<dbReference type="GO" id="GO:0005524">
    <property type="term" value="F:ATP binding"/>
    <property type="evidence" value="ECO:0007669"/>
    <property type="project" value="UniProtKB-UniRule"/>
</dbReference>
<dbReference type="GO" id="GO:0000287">
    <property type="term" value="F:magnesium ion binding"/>
    <property type="evidence" value="ECO:0007669"/>
    <property type="project" value="UniProtKB-UniRule"/>
</dbReference>
<dbReference type="GO" id="GO:0004826">
    <property type="term" value="F:phenylalanine-tRNA ligase activity"/>
    <property type="evidence" value="ECO:0007669"/>
    <property type="project" value="UniProtKB-UniRule"/>
</dbReference>
<dbReference type="GO" id="GO:0000049">
    <property type="term" value="F:tRNA binding"/>
    <property type="evidence" value="ECO:0007669"/>
    <property type="project" value="InterPro"/>
</dbReference>
<dbReference type="GO" id="GO:0006432">
    <property type="term" value="P:phenylalanyl-tRNA aminoacylation"/>
    <property type="evidence" value="ECO:0007669"/>
    <property type="project" value="UniProtKB-UniRule"/>
</dbReference>
<dbReference type="CDD" id="cd00496">
    <property type="entry name" value="PheRS_alpha_core"/>
    <property type="match status" value="1"/>
</dbReference>
<dbReference type="FunFam" id="3.30.930.10:FF:000003">
    <property type="entry name" value="Phenylalanine--tRNA ligase alpha subunit"/>
    <property type="match status" value="1"/>
</dbReference>
<dbReference type="Gene3D" id="3.30.930.10">
    <property type="entry name" value="Bira Bifunctional Protein, Domain 2"/>
    <property type="match status" value="1"/>
</dbReference>
<dbReference type="HAMAP" id="MF_00281">
    <property type="entry name" value="Phe_tRNA_synth_alpha1"/>
    <property type="match status" value="1"/>
</dbReference>
<dbReference type="InterPro" id="IPR006195">
    <property type="entry name" value="aa-tRNA-synth_II"/>
</dbReference>
<dbReference type="InterPro" id="IPR045864">
    <property type="entry name" value="aa-tRNA-synth_II/BPL/LPL"/>
</dbReference>
<dbReference type="InterPro" id="IPR004529">
    <property type="entry name" value="Phe-tRNA-synth_IIc_asu"/>
</dbReference>
<dbReference type="InterPro" id="IPR004188">
    <property type="entry name" value="Phe-tRNA_ligase_II_N"/>
</dbReference>
<dbReference type="InterPro" id="IPR022911">
    <property type="entry name" value="Phe_tRNA_ligase_alpha1_bac"/>
</dbReference>
<dbReference type="InterPro" id="IPR002319">
    <property type="entry name" value="Phenylalanyl-tRNA_Synthase"/>
</dbReference>
<dbReference type="InterPro" id="IPR010978">
    <property type="entry name" value="tRNA-bd_arm"/>
</dbReference>
<dbReference type="NCBIfam" id="TIGR00468">
    <property type="entry name" value="pheS"/>
    <property type="match status" value="1"/>
</dbReference>
<dbReference type="PANTHER" id="PTHR11538:SF41">
    <property type="entry name" value="PHENYLALANINE--TRNA LIGASE, MITOCHONDRIAL"/>
    <property type="match status" value="1"/>
</dbReference>
<dbReference type="PANTHER" id="PTHR11538">
    <property type="entry name" value="PHENYLALANYL-TRNA SYNTHETASE"/>
    <property type="match status" value="1"/>
</dbReference>
<dbReference type="Pfam" id="PF02912">
    <property type="entry name" value="Phe_tRNA-synt_N"/>
    <property type="match status" value="1"/>
</dbReference>
<dbReference type="Pfam" id="PF01409">
    <property type="entry name" value="tRNA-synt_2d"/>
    <property type="match status" value="1"/>
</dbReference>
<dbReference type="SUPFAM" id="SSF55681">
    <property type="entry name" value="Class II aaRS and biotin synthetases"/>
    <property type="match status" value="1"/>
</dbReference>
<dbReference type="SUPFAM" id="SSF46589">
    <property type="entry name" value="tRNA-binding arm"/>
    <property type="match status" value="1"/>
</dbReference>
<dbReference type="PROSITE" id="PS50862">
    <property type="entry name" value="AA_TRNA_LIGASE_II"/>
    <property type="match status" value="1"/>
</dbReference>
<keyword id="KW-0030">Aminoacyl-tRNA synthetase</keyword>
<keyword id="KW-0067">ATP-binding</keyword>
<keyword id="KW-0963">Cytoplasm</keyword>
<keyword id="KW-0436">Ligase</keyword>
<keyword id="KW-0460">Magnesium</keyword>
<keyword id="KW-0479">Metal-binding</keyword>
<keyword id="KW-0547">Nucleotide-binding</keyword>
<keyword id="KW-0648">Protein biosynthesis</keyword>
<sequence length="327" mass="36755">MSHLAELVANAAAAINQASDVAALDNVRVEYLGKKGHLTLQMTTLRDLPPEERPAAGAVINAAKEQVQQALNARKAELESAALNARLAAETIDISLPGRRIENGGLHPVTRTIDRIESFFGELGFTVATGPEIEDDYHNFDALNIPGHHPARADHDTFWFDATRLLRTQTSGVQIRTMKAQQPPIRIIAPGRVYRNDYDQTHTPMFHQMEGLIVDTNISFTNLKGTLHDFLRNFFEEDLQIRFRPSYFPFTEPSAEVDVMGKNGKWLEVLGCGMVHPNVLRNVGIDPEIYSGFAFGMGMERLTMLRYGVTDLRSFFENDLRFLKQFK</sequence>
<accession>B5F7F8</accession>
<evidence type="ECO:0000255" key="1">
    <source>
        <dbReference type="HAMAP-Rule" id="MF_00281"/>
    </source>
</evidence>
<proteinExistence type="inferred from homology"/>
<feature type="chain" id="PRO_1000114908" description="Phenylalanine--tRNA ligase alpha subunit">
    <location>
        <begin position="1"/>
        <end position="327"/>
    </location>
</feature>
<feature type="binding site" evidence="1">
    <location>
        <position position="252"/>
    </location>
    <ligand>
        <name>Mg(2+)</name>
        <dbReference type="ChEBI" id="CHEBI:18420"/>
        <note>shared with beta subunit</note>
    </ligand>
</feature>
<protein>
    <recommendedName>
        <fullName evidence="1">Phenylalanine--tRNA ligase alpha subunit</fullName>
        <ecNumber evidence="1">6.1.1.20</ecNumber>
    </recommendedName>
    <alternativeName>
        <fullName evidence="1">Phenylalanyl-tRNA synthetase alpha subunit</fullName>
        <shortName evidence="1">PheRS</shortName>
    </alternativeName>
</protein>